<reference key="1">
    <citation type="journal article" date="2004" name="Immunogenetics">
        <title>Early expression of two TdT isoforms in the hematopoietic system of the Mexican axolotl. Implications for the evolutionary origin of the N-nucleotide addition.</title>
        <authorList>
            <person name="Golub R."/>
            <person name="Andre S."/>
            <person name="Hassanin A."/>
            <person name="Affaticati P."/>
            <person name="Larijani M."/>
            <person name="Fellah J.S."/>
        </authorList>
    </citation>
    <scope>NUCLEOTIDE SEQUENCE [MRNA] (ISOFORMS 1 AND 2)</scope>
</reference>
<accession>O57486</accession>
<accession>Q800C6</accession>
<evidence type="ECO:0000250" key="1">
    <source>
        <dbReference type="UniProtKB" id="P04053"/>
    </source>
</evidence>
<evidence type="ECO:0000250" key="2">
    <source>
        <dbReference type="UniProtKB" id="P06526"/>
    </source>
</evidence>
<evidence type="ECO:0000250" key="3">
    <source>
        <dbReference type="UniProtKB" id="P09838"/>
    </source>
</evidence>
<evidence type="ECO:0000255" key="4">
    <source>
        <dbReference type="PROSITE-ProRule" id="PRU00033"/>
    </source>
</evidence>
<evidence type="ECO:0000303" key="5">
    <source>
    </source>
</evidence>
<evidence type="ECO:0000305" key="6"/>
<organism>
    <name type="scientific">Ambystoma mexicanum</name>
    <name type="common">Axolotl</name>
    <dbReference type="NCBI Taxonomy" id="8296"/>
    <lineage>
        <taxon>Eukaryota</taxon>
        <taxon>Metazoa</taxon>
        <taxon>Chordata</taxon>
        <taxon>Craniata</taxon>
        <taxon>Vertebrata</taxon>
        <taxon>Euteleostomi</taxon>
        <taxon>Amphibia</taxon>
        <taxon>Batrachia</taxon>
        <taxon>Caudata</taxon>
        <taxon>Salamandroidea</taxon>
        <taxon>Ambystomatidae</taxon>
        <taxon>Ambystoma</taxon>
    </lineage>
</organism>
<gene>
    <name type="primary">DNTT</name>
    <name type="synonym">TDT</name>
</gene>
<proteinExistence type="evidence at transcript level"/>
<keyword id="KW-0025">Alternative splicing</keyword>
<keyword id="KW-0460">Magnesium</keyword>
<keyword id="KW-0479">Metal-binding</keyword>
<keyword id="KW-0548">Nucleotidyltransferase</keyword>
<keyword id="KW-0539">Nucleus</keyword>
<keyword id="KW-0780">Terminal addition</keyword>
<keyword id="KW-0808">Transferase</keyword>
<dbReference type="EC" id="2.7.7.31"/>
<dbReference type="EMBL" id="AF039209">
    <property type="protein sequence ID" value="AAB92673.2"/>
    <property type="molecule type" value="mRNA"/>
</dbReference>
<dbReference type="EMBL" id="AY248700">
    <property type="protein sequence ID" value="AAO92254.1"/>
    <property type="molecule type" value="mRNA"/>
</dbReference>
<dbReference type="SMR" id="O57486"/>
<dbReference type="GO" id="GO:0005634">
    <property type="term" value="C:nucleus"/>
    <property type="evidence" value="ECO:0000250"/>
    <property type="project" value="UniProtKB"/>
</dbReference>
<dbReference type="GO" id="GO:0003677">
    <property type="term" value="F:DNA binding"/>
    <property type="evidence" value="ECO:0007669"/>
    <property type="project" value="InterPro"/>
</dbReference>
<dbReference type="GO" id="GO:0003912">
    <property type="term" value="F:DNA nucleotidylexotransferase activity"/>
    <property type="evidence" value="ECO:0000250"/>
    <property type="project" value="UniProtKB"/>
</dbReference>
<dbReference type="GO" id="GO:0003887">
    <property type="term" value="F:DNA-directed DNA polymerase activity"/>
    <property type="evidence" value="ECO:0007669"/>
    <property type="project" value="InterPro"/>
</dbReference>
<dbReference type="GO" id="GO:0046872">
    <property type="term" value="F:metal ion binding"/>
    <property type="evidence" value="ECO:0007669"/>
    <property type="project" value="UniProtKB-KW"/>
</dbReference>
<dbReference type="GO" id="GO:0006259">
    <property type="term" value="P:DNA metabolic process"/>
    <property type="evidence" value="ECO:0000250"/>
    <property type="project" value="UniProtKB"/>
</dbReference>
<dbReference type="GO" id="GO:0006304">
    <property type="term" value="P:DNA modification"/>
    <property type="evidence" value="ECO:0007669"/>
    <property type="project" value="UniProtKB-KW"/>
</dbReference>
<dbReference type="GO" id="GO:0006303">
    <property type="term" value="P:double-strand break repair via nonhomologous end joining"/>
    <property type="evidence" value="ECO:0007669"/>
    <property type="project" value="TreeGrafter"/>
</dbReference>
<dbReference type="CDD" id="cd00141">
    <property type="entry name" value="NT_POLXc"/>
    <property type="match status" value="1"/>
</dbReference>
<dbReference type="FunFam" id="3.30.210.10:FF:000003">
    <property type="entry name" value="DNA nucleotidylexotransferase"/>
    <property type="match status" value="1"/>
</dbReference>
<dbReference type="FunFam" id="1.10.150.20:FF:000010">
    <property type="entry name" value="DNA polymerase lambda"/>
    <property type="match status" value="1"/>
</dbReference>
<dbReference type="FunFam" id="1.10.150.110:FF:000003">
    <property type="entry name" value="DNA polymerase mu"/>
    <property type="match status" value="1"/>
</dbReference>
<dbReference type="FunFam" id="3.40.50.10190:FF:000035">
    <property type="entry name" value="DNA-directed DNA/RNA polymerase mu"/>
    <property type="match status" value="1"/>
</dbReference>
<dbReference type="Gene3D" id="1.10.150.20">
    <property type="entry name" value="5' to 3' exonuclease, C-terminal subdomain"/>
    <property type="match status" value="1"/>
</dbReference>
<dbReference type="Gene3D" id="3.30.460.10">
    <property type="entry name" value="Beta Polymerase, domain 2"/>
    <property type="match status" value="1"/>
</dbReference>
<dbReference type="Gene3D" id="3.40.50.10190">
    <property type="entry name" value="BRCT domain"/>
    <property type="match status" value="1"/>
</dbReference>
<dbReference type="Gene3D" id="1.10.150.110">
    <property type="entry name" value="DNA polymerase beta, N-terminal domain-like"/>
    <property type="match status" value="1"/>
</dbReference>
<dbReference type="Gene3D" id="3.30.210.10">
    <property type="entry name" value="DNA polymerase, thumb domain"/>
    <property type="match status" value="1"/>
</dbReference>
<dbReference type="InterPro" id="IPR001357">
    <property type="entry name" value="BRCT_dom"/>
</dbReference>
<dbReference type="InterPro" id="IPR036420">
    <property type="entry name" value="BRCT_dom_sf"/>
</dbReference>
<dbReference type="InterPro" id="IPR002054">
    <property type="entry name" value="DNA-dir_DNA_pol_X"/>
</dbReference>
<dbReference type="InterPro" id="IPR019843">
    <property type="entry name" value="DNA_pol-X_BS"/>
</dbReference>
<dbReference type="InterPro" id="IPR010996">
    <property type="entry name" value="DNA_pol_b-like_N"/>
</dbReference>
<dbReference type="InterPro" id="IPR028207">
    <property type="entry name" value="DNA_pol_B_palm_palm"/>
</dbReference>
<dbReference type="InterPro" id="IPR018944">
    <property type="entry name" value="DNA_pol_lambd_fingers_domain"/>
</dbReference>
<dbReference type="InterPro" id="IPR027421">
    <property type="entry name" value="DNA_pol_lamdba_lyase_dom_sf"/>
</dbReference>
<dbReference type="InterPro" id="IPR037160">
    <property type="entry name" value="DNA_Pol_thumb_sf"/>
</dbReference>
<dbReference type="InterPro" id="IPR022312">
    <property type="entry name" value="DNA_pol_X"/>
</dbReference>
<dbReference type="InterPro" id="IPR043519">
    <property type="entry name" value="NT_sf"/>
</dbReference>
<dbReference type="InterPro" id="IPR029398">
    <property type="entry name" value="PolB_thumb"/>
</dbReference>
<dbReference type="InterPro" id="IPR027292">
    <property type="entry name" value="TdT"/>
</dbReference>
<dbReference type="InterPro" id="IPR001726">
    <property type="entry name" value="TdT/Mu"/>
</dbReference>
<dbReference type="PANTHER" id="PTHR11276:SF21">
    <property type="entry name" value="DNA NUCLEOTIDYLEXOTRANSFERASE"/>
    <property type="match status" value="1"/>
</dbReference>
<dbReference type="PANTHER" id="PTHR11276">
    <property type="entry name" value="DNA POLYMERASE TYPE-X FAMILY MEMBER"/>
    <property type="match status" value="1"/>
</dbReference>
<dbReference type="Pfam" id="PF00533">
    <property type="entry name" value="BRCT"/>
    <property type="match status" value="1"/>
</dbReference>
<dbReference type="Pfam" id="PF14792">
    <property type="entry name" value="DNA_pol_B_palm"/>
    <property type="match status" value="1"/>
</dbReference>
<dbReference type="Pfam" id="PF14791">
    <property type="entry name" value="DNA_pol_B_thumb"/>
    <property type="match status" value="1"/>
</dbReference>
<dbReference type="Pfam" id="PF10391">
    <property type="entry name" value="DNA_pol_lambd_f"/>
    <property type="match status" value="1"/>
</dbReference>
<dbReference type="Pfam" id="PF14716">
    <property type="entry name" value="HHH_8"/>
    <property type="match status" value="1"/>
</dbReference>
<dbReference type="PIRSF" id="PIRSF000817">
    <property type="entry name" value="DNA_NT"/>
    <property type="match status" value="1"/>
</dbReference>
<dbReference type="PIRSF" id="PIRSF501175">
    <property type="entry name" value="TDT"/>
    <property type="match status" value="1"/>
</dbReference>
<dbReference type="PRINTS" id="PR00869">
    <property type="entry name" value="DNAPOLX"/>
</dbReference>
<dbReference type="PRINTS" id="PR00871">
    <property type="entry name" value="DNAPOLXTDT"/>
</dbReference>
<dbReference type="SMART" id="SM00292">
    <property type="entry name" value="BRCT"/>
    <property type="match status" value="1"/>
</dbReference>
<dbReference type="SMART" id="SM00483">
    <property type="entry name" value="POLXc"/>
    <property type="match status" value="1"/>
</dbReference>
<dbReference type="SUPFAM" id="SSF52113">
    <property type="entry name" value="BRCT domain"/>
    <property type="match status" value="1"/>
</dbReference>
<dbReference type="SUPFAM" id="SSF47802">
    <property type="entry name" value="DNA polymerase beta, N-terminal domain-like"/>
    <property type="match status" value="1"/>
</dbReference>
<dbReference type="SUPFAM" id="SSF81301">
    <property type="entry name" value="Nucleotidyltransferase"/>
    <property type="match status" value="1"/>
</dbReference>
<dbReference type="SUPFAM" id="SSF81585">
    <property type="entry name" value="PsbU/PolX domain-like"/>
    <property type="match status" value="1"/>
</dbReference>
<dbReference type="PROSITE" id="PS50172">
    <property type="entry name" value="BRCT"/>
    <property type="match status" value="1"/>
</dbReference>
<dbReference type="PROSITE" id="PS00522">
    <property type="entry name" value="DNA_POLYMERASE_X"/>
    <property type="match status" value="1"/>
</dbReference>
<protein>
    <recommendedName>
        <fullName>DNA nucleotidylexotransferase</fullName>
        <ecNumber>2.7.7.31</ecNumber>
    </recommendedName>
    <alternativeName>
        <fullName>Terminal addition enzyme</fullName>
    </alternativeName>
    <alternativeName>
        <fullName>Terminal deoxynucleotidyltransferase</fullName>
        <shortName>Terminal transferase</shortName>
    </alternativeName>
</protein>
<feature type="chain" id="PRO_0000218794" description="DNA nucleotidylexotransferase">
    <location>
        <begin position="1"/>
        <end position="510"/>
    </location>
</feature>
<feature type="domain" description="BRCT" evidence="4">
    <location>
        <begin position="27"/>
        <end position="124"/>
    </location>
</feature>
<feature type="region of interest" description="Involved in DNA binding" evidence="3">
    <location>
        <begin position="254"/>
        <end position="258"/>
    </location>
</feature>
<feature type="short sequence motif" description="Nuclear localization signal" evidence="2">
    <location>
        <begin position="11"/>
        <end position="17"/>
    </location>
</feature>
<feature type="binding site" evidence="3">
    <location>
        <begin position="329"/>
        <end position="334"/>
    </location>
    <ligand>
        <name>a 2'-deoxyribonucleoside 5'-triphosphate</name>
        <dbReference type="ChEBI" id="CHEBI:61560"/>
    </ligand>
</feature>
<feature type="binding site" evidence="3">
    <location>
        <begin position="338"/>
        <end position="341"/>
    </location>
    <ligand>
        <name>a 2'-deoxyribonucleoside 5'-triphosphate</name>
        <dbReference type="ChEBI" id="CHEBI:61560"/>
    </ligand>
</feature>
<feature type="binding site" evidence="3">
    <location>
        <position position="339"/>
    </location>
    <ligand>
        <name>Mg(2+)</name>
        <dbReference type="ChEBI" id="CHEBI:18420"/>
    </ligand>
</feature>
<feature type="binding site" evidence="3">
    <location>
        <position position="341"/>
    </location>
    <ligand>
        <name>Mg(2+)</name>
        <dbReference type="ChEBI" id="CHEBI:18420"/>
    </ligand>
</feature>
<feature type="binding site" evidence="3">
    <location>
        <position position="434"/>
    </location>
    <ligand>
        <name>Mg(2+)</name>
        <dbReference type="ChEBI" id="CHEBI:18420"/>
    </ligand>
</feature>
<feature type="binding site" evidence="3">
    <location>
        <begin position="449"/>
        <end position="450"/>
    </location>
    <ligand>
        <name>a 2'-deoxyribonucleoside 5'-triphosphate</name>
        <dbReference type="ChEBI" id="CHEBI:61560"/>
    </ligand>
</feature>
<feature type="splice variant" id="VSP_007952" description="In isoform 2." evidence="5">
    <location>
        <begin position="166"/>
        <end position="222"/>
    </location>
</feature>
<sequence>MYAFPTTRIAPRRKQPKCIKPPKCTSKYDIKFKDIAIYILERKMGASRRYFLMELARKKGFRVEPDLSEYVTHVVSEKNSGAEVLEWLQAKKAGSIPNVAILDISWFTDCMGAGQPVEIERKHRLTLQKICVCKSPSPVVPSRVGVSQYACQRKTTLDNKNTLFTDAFEILAENYEFRENERSCLSFRQAASVLKSLTFTIAGMADVDGLPGFGDHIRAVIEDLIEDGESSKVSEVLNDEVYRSLKLFTTIFGVGLRTAEKWHRLGIRTLEEIKSNENLKFSKMQIAGLQHYEDILGGVRKAEADAVAMVVRDAVWTFLPDAVVTLTGGFRRGNKTGHDVDMLITSPIQGKEKELLHKVINLWKKQDLLLCHTIHESTMDEDNLPSKSVNLLDHFQKCFAILKSNQHRGEISSCDGPHDSRERGKRIWKAIRVDLVFCPFEQYAFALLGWTGSRQFERDLRRYASHEKKMMIDNHALYDKTKRVFVKCESEEEIFGHLGLEYIDPVERNA</sequence>
<comment type="function">
    <text evidence="3">Template-independent DNA polymerase which catalyzes the random addition of deoxynucleoside 5'-triphosphate to the 3'-end of a DNA initiator. One of the in vivo functions of this enzyme is the addition of nucleotides at the junction (N region) of rearranged Ig heavy chain and T-cell receptor gene segments during the maturation of B- and T-cells.</text>
</comment>
<comment type="catalytic activity">
    <reaction evidence="3">
        <text>DNA(n) + a 2'-deoxyribonucleoside 5'-triphosphate = DNA(n+1) + diphosphate</text>
        <dbReference type="Rhea" id="RHEA:22508"/>
        <dbReference type="Rhea" id="RHEA-COMP:17339"/>
        <dbReference type="Rhea" id="RHEA-COMP:17340"/>
        <dbReference type="ChEBI" id="CHEBI:33019"/>
        <dbReference type="ChEBI" id="CHEBI:61560"/>
        <dbReference type="ChEBI" id="CHEBI:173112"/>
        <dbReference type="EC" id="2.7.7.31"/>
    </reaction>
</comment>
<comment type="cofactor">
    <cofactor evidence="3">
        <name>Mg(2+)</name>
        <dbReference type="ChEBI" id="CHEBI:18420"/>
    </cofactor>
    <text evidence="3">Can also utilize other divalent cations, such as Mn(2+) and Co(2+) (in vitro).</text>
</comment>
<comment type="subcellular location">
    <subcellularLocation>
        <location evidence="1">Nucleus</location>
    </subcellularLocation>
</comment>
<comment type="alternative products">
    <event type="alternative splicing"/>
    <isoform>
        <id>O57486-1</id>
        <name>1</name>
        <sequence type="displayed"/>
    </isoform>
    <isoform>
        <id>O57486-2</id>
        <name>2</name>
        <sequence type="described" ref="VSP_007952"/>
    </isoform>
</comment>
<comment type="similarity">
    <text evidence="6">Belongs to the DNA polymerase type-X family.</text>
</comment>
<name>TDT_AMBME</name>